<proteinExistence type="evidence at protein level"/>
<accession>P63177</accession>
<accession>P39290</accession>
<accession>Q2M6C5</accession>
<protein>
    <recommendedName>
        <fullName>23S rRNA (guanosine-2'-O-)-methyltransferase RlmB</fullName>
        <ecNumber>2.1.1.185</ecNumber>
    </recommendedName>
    <alternativeName>
        <fullName>23S rRNA (guanosine2251 2'-O)-methyltransferase</fullName>
    </alternativeName>
    <alternativeName>
        <fullName>23S rRNA Gm2251 2'-O-methyltransferase</fullName>
    </alternativeName>
</protein>
<keyword id="KW-0002">3D-structure</keyword>
<keyword id="KW-0963">Cytoplasm</keyword>
<keyword id="KW-0489">Methyltransferase</keyword>
<keyword id="KW-1185">Reference proteome</keyword>
<keyword id="KW-0698">rRNA processing</keyword>
<keyword id="KW-0949">S-adenosyl-L-methionine</keyword>
<keyword id="KW-0808">Transferase</keyword>
<name>RLMB_ECOLI</name>
<organism>
    <name type="scientific">Escherichia coli (strain K12)</name>
    <dbReference type="NCBI Taxonomy" id="83333"/>
    <lineage>
        <taxon>Bacteria</taxon>
        <taxon>Pseudomonadati</taxon>
        <taxon>Pseudomonadota</taxon>
        <taxon>Gammaproteobacteria</taxon>
        <taxon>Enterobacterales</taxon>
        <taxon>Enterobacteriaceae</taxon>
        <taxon>Escherichia</taxon>
    </lineage>
</organism>
<dbReference type="EC" id="2.1.1.185"/>
<dbReference type="EMBL" id="U14003">
    <property type="protein sequence ID" value="AAA97076.1"/>
    <property type="molecule type" value="Genomic_DNA"/>
</dbReference>
<dbReference type="EMBL" id="U00096">
    <property type="protein sequence ID" value="AAC77137.1"/>
    <property type="molecule type" value="Genomic_DNA"/>
</dbReference>
<dbReference type="EMBL" id="AP009048">
    <property type="protein sequence ID" value="BAE78181.1"/>
    <property type="molecule type" value="Genomic_DNA"/>
</dbReference>
<dbReference type="PIR" id="S56405">
    <property type="entry name" value="S56405"/>
</dbReference>
<dbReference type="RefSeq" id="NP_418601.1">
    <property type="nucleotide sequence ID" value="NC_000913.3"/>
</dbReference>
<dbReference type="RefSeq" id="WP_001293282.1">
    <property type="nucleotide sequence ID" value="NZ_STEB01000013.1"/>
</dbReference>
<dbReference type="PDB" id="1GZ0">
    <property type="method" value="X-ray"/>
    <property type="resolution" value="2.50 A"/>
    <property type="chains" value="A/B/C/D/E/F/G/H=1-243"/>
</dbReference>
<dbReference type="PDBsum" id="1GZ0"/>
<dbReference type="SMR" id="P63177"/>
<dbReference type="BioGRID" id="4261811">
    <property type="interactions" value="38"/>
</dbReference>
<dbReference type="BioGRID" id="852986">
    <property type="interactions" value="2"/>
</dbReference>
<dbReference type="DIP" id="DIP-47866N"/>
<dbReference type="FunCoup" id="P63177">
    <property type="interactions" value="622"/>
</dbReference>
<dbReference type="IntAct" id="P63177">
    <property type="interactions" value="19"/>
</dbReference>
<dbReference type="STRING" id="511145.b4180"/>
<dbReference type="jPOST" id="P63177"/>
<dbReference type="PaxDb" id="511145-b4180"/>
<dbReference type="EnsemblBacteria" id="AAC77137">
    <property type="protein sequence ID" value="AAC77137"/>
    <property type="gene ID" value="b4180"/>
</dbReference>
<dbReference type="GeneID" id="93777641"/>
<dbReference type="GeneID" id="948694"/>
<dbReference type="KEGG" id="ecj:JW4138"/>
<dbReference type="KEGG" id="eco:b4180"/>
<dbReference type="KEGG" id="ecoc:C3026_22585"/>
<dbReference type="PATRIC" id="fig|1411691.4.peg.2521"/>
<dbReference type="EchoBASE" id="EB2376"/>
<dbReference type="eggNOG" id="COG0566">
    <property type="taxonomic scope" value="Bacteria"/>
</dbReference>
<dbReference type="HOGENOM" id="CLU_021322_0_1_6"/>
<dbReference type="InParanoid" id="P63177"/>
<dbReference type="OMA" id="QVPPYEY"/>
<dbReference type="OrthoDB" id="9785673at2"/>
<dbReference type="PhylomeDB" id="P63177"/>
<dbReference type="BioCyc" id="EcoCyc:G7845-MONOMER"/>
<dbReference type="BioCyc" id="MetaCyc:G7845-MONOMER"/>
<dbReference type="BRENDA" id="2.1.1.185">
    <property type="organism ID" value="2026"/>
</dbReference>
<dbReference type="EvolutionaryTrace" id="P63177"/>
<dbReference type="PRO" id="PR:P63177"/>
<dbReference type="Proteomes" id="UP000000625">
    <property type="component" value="Chromosome"/>
</dbReference>
<dbReference type="GO" id="GO:0005829">
    <property type="term" value="C:cytosol"/>
    <property type="evidence" value="ECO:0000314"/>
    <property type="project" value="EcoCyc"/>
</dbReference>
<dbReference type="GO" id="GO:0003723">
    <property type="term" value="F:RNA binding"/>
    <property type="evidence" value="ECO:0007669"/>
    <property type="project" value="InterPro"/>
</dbReference>
<dbReference type="GO" id="GO:0070039">
    <property type="term" value="F:rRNA (guanosine-2'-O-)-methyltransferase activity"/>
    <property type="evidence" value="ECO:0000315"/>
    <property type="project" value="EcoCyc"/>
</dbReference>
<dbReference type="GO" id="GO:0006364">
    <property type="term" value="P:rRNA processing"/>
    <property type="evidence" value="ECO:0000315"/>
    <property type="project" value="EcoCyc"/>
</dbReference>
<dbReference type="CDD" id="cd18103">
    <property type="entry name" value="SpoU-like_RlmB"/>
    <property type="match status" value="1"/>
</dbReference>
<dbReference type="FunFam" id="3.40.1280.10:FF:000005">
    <property type="entry name" value="23S rRNA (guanosine-2'-O-)-methyltransferase RlmB"/>
    <property type="match status" value="1"/>
</dbReference>
<dbReference type="FunFam" id="3.30.1330.30:FF:000007">
    <property type="entry name" value="23S rRNA methyltransferase"/>
    <property type="match status" value="1"/>
</dbReference>
<dbReference type="Gene3D" id="3.30.1330.30">
    <property type="match status" value="1"/>
</dbReference>
<dbReference type="Gene3D" id="3.40.1280.10">
    <property type="match status" value="1"/>
</dbReference>
<dbReference type="HAMAP" id="MF_01887">
    <property type="entry name" value="23SrRNA_methyltr_B"/>
    <property type="match status" value="1"/>
</dbReference>
<dbReference type="InterPro" id="IPR024915">
    <property type="entry name" value="23S_rRNA_MeTrfase_RlmB"/>
</dbReference>
<dbReference type="InterPro" id="IPR029028">
    <property type="entry name" value="Alpha/beta_knot_MTases"/>
</dbReference>
<dbReference type="InterPro" id="IPR029064">
    <property type="entry name" value="Ribosomal_eL30-like_sf"/>
</dbReference>
<dbReference type="InterPro" id="IPR004441">
    <property type="entry name" value="rRNA_MeTrfase_TrmH"/>
</dbReference>
<dbReference type="InterPro" id="IPR001537">
    <property type="entry name" value="SpoU_MeTrfase"/>
</dbReference>
<dbReference type="InterPro" id="IPR013123">
    <property type="entry name" value="SpoU_subst-bd"/>
</dbReference>
<dbReference type="InterPro" id="IPR029026">
    <property type="entry name" value="tRNA_m1G_MTases_N"/>
</dbReference>
<dbReference type="NCBIfam" id="NF008386">
    <property type="entry name" value="PRK11181.1"/>
    <property type="match status" value="1"/>
</dbReference>
<dbReference type="NCBIfam" id="TIGR00186">
    <property type="entry name" value="rRNA_methyl_3"/>
    <property type="match status" value="1"/>
</dbReference>
<dbReference type="PANTHER" id="PTHR46429">
    <property type="entry name" value="23S RRNA (GUANOSINE-2'-O-)-METHYLTRANSFERASE RLMB"/>
    <property type="match status" value="1"/>
</dbReference>
<dbReference type="PANTHER" id="PTHR46429:SF1">
    <property type="entry name" value="23S RRNA (GUANOSINE-2'-O-)-METHYLTRANSFERASE RLMB"/>
    <property type="match status" value="1"/>
</dbReference>
<dbReference type="Pfam" id="PF00588">
    <property type="entry name" value="SpoU_methylase"/>
    <property type="match status" value="1"/>
</dbReference>
<dbReference type="Pfam" id="PF08032">
    <property type="entry name" value="SpoU_sub_bind"/>
    <property type="match status" value="1"/>
</dbReference>
<dbReference type="SMART" id="SM00967">
    <property type="entry name" value="SpoU_sub_bind"/>
    <property type="match status" value="1"/>
</dbReference>
<dbReference type="SUPFAM" id="SSF75217">
    <property type="entry name" value="alpha/beta knot"/>
    <property type="match status" value="1"/>
</dbReference>
<dbReference type="SUPFAM" id="SSF55315">
    <property type="entry name" value="L30e-like"/>
    <property type="match status" value="1"/>
</dbReference>
<reference key="1">
    <citation type="journal article" date="1995" name="Nucleic Acids Res.">
        <title>Analysis of the Escherichia coli genome VI: DNA sequence of the region from 92.8 through 100 minutes.</title>
        <authorList>
            <person name="Burland V.D."/>
            <person name="Plunkett G. III"/>
            <person name="Sofia H.J."/>
            <person name="Daniels D.L."/>
            <person name="Blattner F.R."/>
        </authorList>
    </citation>
    <scope>NUCLEOTIDE SEQUENCE [LARGE SCALE GENOMIC DNA]</scope>
    <source>
        <strain>K12 / MG1655 / ATCC 47076</strain>
    </source>
</reference>
<reference key="2">
    <citation type="journal article" date="1997" name="Science">
        <title>The complete genome sequence of Escherichia coli K-12.</title>
        <authorList>
            <person name="Blattner F.R."/>
            <person name="Plunkett G. III"/>
            <person name="Bloch C.A."/>
            <person name="Perna N.T."/>
            <person name="Burland V."/>
            <person name="Riley M."/>
            <person name="Collado-Vides J."/>
            <person name="Glasner J.D."/>
            <person name="Rode C.K."/>
            <person name="Mayhew G.F."/>
            <person name="Gregor J."/>
            <person name="Davis N.W."/>
            <person name="Kirkpatrick H.A."/>
            <person name="Goeden M.A."/>
            <person name="Rose D.J."/>
            <person name="Mau B."/>
            <person name="Shao Y."/>
        </authorList>
    </citation>
    <scope>NUCLEOTIDE SEQUENCE [LARGE SCALE GENOMIC DNA]</scope>
    <source>
        <strain>K12 / MG1655 / ATCC 47076</strain>
    </source>
</reference>
<reference key="3">
    <citation type="journal article" date="2006" name="Mol. Syst. Biol.">
        <title>Highly accurate genome sequences of Escherichia coli K-12 strains MG1655 and W3110.</title>
        <authorList>
            <person name="Hayashi K."/>
            <person name="Morooka N."/>
            <person name="Yamamoto Y."/>
            <person name="Fujita K."/>
            <person name="Isono K."/>
            <person name="Choi S."/>
            <person name="Ohtsubo E."/>
            <person name="Baba T."/>
            <person name="Wanner B.L."/>
            <person name="Mori H."/>
            <person name="Horiuchi T."/>
        </authorList>
    </citation>
    <scope>NUCLEOTIDE SEQUENCE [LARGE SCALE GENOMIC DNA]</scope>
    <source>
        <strain>K12 / W3110 / ATCC 27325 / DSM 5911</strain>
    </source>
</reference>
<reference key="4">
    <citation type="journal article" date="2001" name="J. Bacteriol.">
        <title>The rlmB gene is essential for formation of Gm2251 in 23S rRNA but not for ribosome maturation in Escherichia coli.</title>
        <authorList>
            <person name="Loevgren J.M."/>
            <person name="Wikstroem P.M."/>
        </authorList>
    </citation>
    <scope>FUNCTION</scope>
    <scope>CATALYTIC ACTIVITY</scope>
</reference>
<reference key="5">
    <citation type="journal article" date="2002" name="Structure">
        <title>The structure of the RlmB 23S rRNA methyltransferase reveals a new methyltransferase fold with a unique knot.</title>
        <authorList>
            <person name="Michel G."/>
            <person name="Sauve V."/>
            <person name="Larocque R."/>
            <person name="Li Y."/>
            <person name="Matte A."/>
            <person name="Cygler M."/>
        </authorList>
    </citation>
    <scope>X-RAY CRYSTALLOGRAPHY (2.5 ANGSTROMS)</scope>
    <scope>SUBUNIT</scope>
    <source>
        <strain>K12 / MC1061 / ATCC 53338 / DSM 7140</strain>
    </source>
</reference>
<gene>
    <name type="primary">rlmB</name>
    <name type="synonym">yjfH</name>
    <name type="ordered locus">b4180</name>
    <name type="ordered locus">JW4138</name>
</gene>
<comment type="function">
    <text evidence="2">Specifically methylates the ribose of guanosine 2251 in 23S rRNA.</text>
</comment>
<comment type="catalytic activity">
    <reaction evidence="2">
        <text>guanosine(2251) in 23S rRNA + S-adenosyl-L-methionine = 2'-O-methylguanosine(2251) in 23S rRNA + S-adenosyl-L-homocysteine + H(+)</text>
        <dbReference type="Rhea" id="RHEA:24140"/>
        <dbReference type="Rhea" id="RHEA-COMP:10239"/>
        <dbReference type="Rhea" id="RHEA-COMP:10241"/>
        <dbReference type="ChEBI" id="CHEBI:15378"/>
        <dbReference type="ChEBI" id="CHEBI:57856"/>
        <dbReference type="ChEBI" id="CHEBI:59789"/>
        <dbReference type="ChEBI" id="CHEBI:74269"/>
        <dbReference type="ChEBI" id="CHEBI:74445"/>
        <dbReference type="EC" id="2.1.1.185"/>
    </reaction>
</comment>
<comment type="subunit">
    <text evidence="3">Homodimer.</text>
</comment>
<comment type="interaction">
    <interactant intactId="EBI-562712">
        <id>P63177</id>
    </interactant>
    <interactant intactId="EBI-554188">
        <id>P31806</id>
        <label>nnr</label>
    </interactant>
    <organismsDiffer>false</organismsDiffer>
    <experiments>3</experiments>
</comment>
<comment type="interaction">
    <interactant intactId="EBI-562712">
        <id>P63177</id>
    </interactant>
    <interactant intactId="EBI-561268">
        <id>P0AF67</id>
        <label>tsaE</label>
    </interactant>
    <organismsDiffer>false</organismsDiffer>
    <experiments>3</experiments>
</comment>
<comment type="subcellular location">
    <subcellularLocation>
        <location evidence="4">Cytoplasm</location>
    </subcellularLocation>
</comment>
<comment type="similarity">
    <text evidence="4">Belongs to the class IV-like SAM-binding methyltransferase superfamily. RNA methyltransferase TrmH family. RlmB subfamily.</text>
</comment>
<sequence length="243" mass="26557">MSEMIYGIHAVQALLERAPERFQEVFILKGREDKRLLPLIHALESQGVVIQLANRQYLDEKSDGAVHQGIIARVKPGRQYQENDLPDLIASLDQPFLLILDGVTDPHNLGACLRSADAAGVHAVIVPKDRSAQLNATAKKVACGAAESVPLIRVTNLARTMRMLQEENIWIVGTAGEADHTLYQSKMTGRLALVMGAEGEGMRRLTREHCDELISIPMAGSVSSLNVSVATGICLFEAVRQRS</sequence>
<feature type="chain" id="PRO_0000159785" description="23S rRNA (guanosine-2'-O-)-methyltransferase RlmB">
    <location>
        <begin position="1"/>
        <end position="243"/>
    </location>
</feature>
<feature type="binding site" evidence="1">
    <location>
        <position position="196"/>
    </location>
    <ligand>
        <name>S-adenosyl-L-methionine</name>
        <dbReference type="ChEBI" id="CHEBI:59789"/>
    </ligand>
</feature>
<feature type="binding site" evidence="1">
    <location>
        <position position="216"/>
    </location>
    <ligand>
        <name>S-adenosyl-L-methionine</name>
        <dbReference type="ChEBI" id="CHEBI:59789"/>
    </ligand>
</feature>
<feature type="binding site" evidence="1">
    <location>
        <position position="225"/>
    </location>
    <ligand>
        <name>S-adenosyl-L-methionine</name>
        <dbReference type="ChEBI" id="CHEBI:59789"/>
    </ligand>
</feature>
<feature type="strand" evidence="5">
    <location>
        <begin position="3"/>
        <end position="7"/>
    </location>
</feature>
<feature type="helix" evidence="5">
    <location>
        <begin position="8"/>
        <end position="16"/>
    </location>
</feature>
<feature type="helix" evidence="5">
    <location>
        <begin position="19"/>
        <end position="21"/>
    </location>
</feature>
<feature type="strand" evidence="5">
    <location>
        <begin position="22"/>
        <end position="30"/>
    </location>
</feature>
<feature type="turn" evidence="5">
    <location>
        <begin position="34"/>
        <end position="36"/>
    </location>
</feature>
<feature type="helix" evidence="5">
    <location>
        <begin position="37"/>
        <end position="46"/>
    </location>
</feature>
<feature type="strand" evidence="5">
    <location>
        <begin position="49"/>
        <end position="53"/>
    </location>
</feature>
<feature type="helix" evidence="5">
    <location>
        <begin position="56"/>
        <end position="60"/>
    </location>
</feature>
<feature type="turn" evidence="5">
    <location>
        <begin position="61"/>
        <end position="63"/>
    </location>
</feature>
<feature type="strand" evidence="5">
    <location>
        <begin position="70"/>
        <end position="74"/>
    </location>
</feature>
<feature type="helix" evidence="5">
    <location>
        <begin position="82"/>
        <end position="84"/>
    </location>
</feature>
<feature type="helix" evidence="5">
    <location>
        <begin position="85"/>
        <end position="90"/>
    </location>
</feature>
<feature type="strand" evidence="5">
    <location>
        <begin position="96"/>
        <end position="102"/>
    </location>
</feature>
<feature type="helix" evidence="5">
    <location>
        <begin position="106"/>
        <end position="119"/>
    </location>
</feature>
<feature type="strand" evidence="5">
    <location>
        <begin position="122"/>
        <end position="131"/>
    </location>
</feature>
<feature type="helix" evidence="5">
    <location>
        <begin position="136"/>
        <end position="142"/>
    </location>
</feature>
<feature type="helix" evidence="5">
    <location>
        <begin position="145"/>
        <end position="148"/>
    </location>
</feature>
<feature type="strand" evidence="5">
    <location>
        <begin position="151"/>
        <end position="155"/>
    </location>
</feature>
<feature type="helix" evidence="5">
    <location>
        <begin position="157"/>
        <end position="166"/>
    </location>
</feature>
<feature type="strand" evidence="5">
    <location>
        <begin position="170"/>
        <end position="174"/>
    </location>
</feature>
<feature type="strand" evidence="5">
    <location>
        <begin position="179"/>
        <end position="181"/>
    </location>
</feature>
<feature type="helix" evidence="5">
    <location>
        <begin position="182"/>
        <end position="184"/>
    </location>
</feature>
<feature type="strand" evidence="5">
    <location>
        <begin position="189"/>
        <end position="197"/>
    </location>
</feature>
<feature type="turn" evidence="5">
    <location>
        <begin position="198"/>
        <end position="200"/>
    </location>
</feature>
<feature type="helix" evidence="5">
    <location>
        <begin position="204"/>
        <end position="208"/>
    </location>
</feature>
<feature type="strand" evidence="5">
    <location>
        <begin position="211"/>
        <end position="215"/>
    </location>
</feature>
<feature type="strand" evidence="5">
    <location>
        <begin position="219"/>
        <end position="222"/>
    </location>
</feature>
<feature type="helix" evidence="5">
    <location>
        <begin position="227"/>
        <end position="241"/>
    </location>
</feature>
<evidence type="ECO:0000250" key="1"/>
<evidence type="ECO:0000269" key="2">
    <source>
    </source>
</evidence>
<evidence type="ECO:0000269" key="3">
    <source>
    </source>
</evidence>
<evidence type="ECO:0000305" key="4"/>
<evidence type="ECO:0007829" key="5">
    <source>
        <dbReference type="PDB" id="1GZ0"/>
    </source>
</evidence>